<organism>
    <name type="scientific">Legionella pneumophila subsp. pneumophila (strain Philadelphia 1 / ATCC 33152 / DSM 7513)</name>
    <dbReference type="NCBI Taxonomy" id="272624"/>
    <lineage>
        <taxon>Bacteria</taxon>
        <taxon>Pseudomonadati</taxon>
        <taxon>Pseudomonadota</taxon>
        <taxon>Gammaproteobacteria</taxon>
        <taxon>Legionellales</taxon>
        <taxon>Legionellaceae</taxon>
        <taxon>Legionella</taxon>
    </lineage>
</organism>
<sequence>MNSSLRDIANLVQGMVIGNDAITVSTLSPIDNILPGSLVFAEGEDNIKLAENSEAAAILIGQGTIDSPKPLIQVKNPFKAFIALLNHFYPPRRISPGVHPTAVIGAEVQLGDEVYVGPFVVIESGSIIGNHSVLKSHIHIGHNVVIGDHTTIHPQVTIYDNCRIGSNVTIHASTVIGSDGFGYTFVDGQHLKVPHSGYVVIENNVEIGANTAIDKATLGATVIGEGTKIDNLVQIAHSVKLGKHNIICAFTGIAGSTTTGNNVIFAANVGVSDHVHIEDEVILGARTGVPPHKHLKKGTVYLGNPAKPKDVAIKHELSVNRIPLIRKNIKSLTEQVAVINKKLDIKAKEVE</sequence>
<proteinExistence type="inferred from homology"/>
<feature type="chain" id="PRO_0000264391" description="UDP-3-O-acylglucosamine N-acyltransferase 1">
    <location>
        <begin position="1"/>
        <end position="351"/>
    </location>
</feature>
<feature type="active site" description="Proton acceptor" evidence="1">
    <location>
        <position position="237"/>
    </location>
</feature>
<dbReference type="EC" id="2.3.1.191" evidence="1"/>
<dbReference type="EMBL" id="AE017354">
    <property type="protein sequence ID" value="AAU26207.1"/>
    <property type="status" value="ALT_INIT"/>
    <property type="molecule type" value="Genomic_DNA"/>
</dbReference>
<dbReference type="RefSeq" id="YP_094154.1">
    <property type="nucleotide sequence ID" value="NC_002942.5"/>
</dbReference>
<dbReference type="SMR" id="Q5ZZB1"/>
<dbReference type="STRING" id="272624.lpg0100"/>
<dbReference type="PaxDb" id="272624-lpg0100"/>
<dbReference type="KEGG" id="lpn:lpg0100"/>
<dbReference type="PATRIC" id="fig|272624.6.peg.106"/>
<dbReference type="eggNOG" id="COG1044">
    <property type="taxonomic scope" value="Bacteria"/>
</dbReference>
<dbReference type="HOGENOM" id="CLU_049865_0_0_6"/>
<dbReference type="OrthoDB" id="9784739at2"/>
<dbReference type="UniPathway" id="UPA00973"/>
<dbReference type="Proteomes" id="UP000000609">
    <property type="component" value="Chromosome"/>
</dbReference>
<dbReference type="GO" id="GO:0016020">
    <property type="term" value="C:membrane"/>
    <property type="evidence" value="ECO:0007669"/>
    <property type="project" value="GOC"/>
</dbReference>
<dbReference type="GO" id="GO:0016410">
    <property type="term" value="F:N-acyltransferase activity"/>
    <property type="evidence" value="ECO:0007669"/>
    <property type="project" value="InterPro"/>
</dbReference>
<dbReference type="GO" id="GO:0009245">
    <property type="term" value="P:lipid A biosynthetic process"/>
    <property type="evidence" value="ECO:0007669"/>
    <property type="project" value="UniProtKB-UniRule"/>
</dbReference>
<dbReference type="CDD" id="cd03352">
    <property type="entry name" value="LbH_LpxD"/>
    <property type="match status" value="1"/>
</dbReference>
<dbReference type="Gene3D" id="2.160.10.10">
    <property type="entry name" value="Hexapeptide repeat proteins"/>
    <property type="match status" value="1"/>
</dbReference>
<dbReference type="Gene3D" id="3.40.1390.10">
    <property type="entry name" value="MurE/MurF, N-terminal domain"/>
    <property type="match status" value="1"/>
</dbReference>
<dbReference type="HAMAP" id="MF_00523">
    <property type="entry name" value="LpxD"/>
    <property type="match status" value="1"/>
</dbReference>
<dbReference type="InterPro" id="IPR001451">
    <property type="entry name" value="Hexapep"/>
</dbReference>
<dbReference type="InterPro" id="IPR018357">
    <property type="entry name" value="Hexapep_transf_CS"/>
</dbReference>
<dbReference type="InterPro" id="IPR007691">
    <property type="entry name" value="LpxD"/>
</dbReference>
<dbReference type="InterPro" id="IPR011004">
    <property type="entry name" value="Trimer_LpxA-like_sf"/>
</dbReference>
<dbReference type="InterPro" id="IPR020573">
    <property type="entry name" value="UDP_GlcNAc_AcTrfase_non-rep"/>
</dbReference>
<dbReference type="NCBIfam" id="TIGR01853">
    <property type="entry name" value="lipid_A_lpxD"/>
    <property type="match status" value="1"/>
</dbReference>
<dbReference type="NCBIfam" id="NF002060">
    <property type="entry name" value="PRK00892.1"/>
    <property type="match status" value="1"/>
</dbReference>
<dbReference type="PANTHER" id="PTHR43378">
    <property type="entry name" value="UDP-3-O-ACYLGLUCOSAMINE N-ACYLTRANSFERASE"/>
    <property type="match status" value="1"/>
</dbReference>
<dbReference type="PANTHER" id="PTHR43378:SF2">
    <property type="entry name" value="UDP-3-O-ACYLGLUCOSAMINE N-ACYLTRANSFERASE 1, MITOCHONDRIAL-RELATED"/>
    <property type="match status" value="1"/>
</dbReference>
<dbReference type="Pfam" id="PF00132">
    <property type="entry name" value="Hexapep"/>
    <property type="match status" value="3"/>
</dbReference>
<dbReference type="Pfam" id="PF04613">
    <property type="entry name" value="LpxD"/>
    <property type="match status" value="1"/>
</dbReference>
<dbReference type="SUPFAM" id="SSF51161">
    <property type="entry name" value="Trimeric LpxA-like enzymes"/>
    <property type="match status" value="1"/>
</dbReference>
<dbReference type="PROSITE" id="PS00101">
    <property type="entry name" value="HEXAPEP_TRANSFERASES"/>
    <property type="match status" value="2"/>
</dbReference>
<protein>
    <recommendedName>
        <fullName evidence="1">UDP-3-O-acylglucosamine N-acyltransferase 1</fullName>
        <ecNumber evidence="1">2.3.1.191</ecNumber>
    </recommendedName>
</protein>
<evidence type="ECO:0000255" key="1">
    <source>
        <dbReference type="HAMAP-Rule" id="MF_00523"/>
    </source>
</evidence>
<evidence type="ECO:0000305" key="2"/>
<name>LPXD1_LEGPH</name>
<reference key="1">
    <citation type="journal article" date="2004" name="Science">
        <title>The genomic sequence of the accidental pathogen Legionella pneumophila.</title>
        <authorList>
            <person name="Chien M."/>
            <person name="Morozova I."/>
            <person name="Shi S."/>
            <person name="Sheng H."/>
            <person name="Chen J."/>
            <person name="Gomez S.M."/>
            <person name="Asamani G."/>
            <person name="Hill K."/>
            <person name="Nuara J."/>
            <person name="Feder M."/>
            <person name="Rineer J."/>
            <person name="Greenberg J.J."/>
            <person name="Steshenko V."/>
            <person name="Park S.H."/>
            <person name="Zhao B."/>
            <person name="Teplitskaya E."/>
            <person name="Edwards J.R."/>
            <person name="Pampou S."/>
            <person name="Georghiou A."/>
            <person name="Chou I.-C."/>
            <person name="Iannuccilli W."/>
            <person name="Ulz M.E."/>
            <person name="Kim D.H."/>
            <person name="Geringer-Sameth A."/>
            <person name="Goldsberry C."/>
            <person name="Morozov P."/>
            <person name="Fischer S.G."/>
            <person name="Segal G."/>
            <person name="Qu X."/>
            <person name="Rzhetsky A."/>
            <person name="Zhang P."/>
            <person name="Cayanis E."/>
            <person name="De Jong P.J."/>
            <person name="Ju J."/>
            <person name="Kalachikov S."/>
            <person name="Shuman H.A."/>
            <person name="Russo J.J."/>
        </authorList>
    </citation>
    <scope>NUCLEOTIDE SEQUENCE [LARGE SCALE GENOMIC DNA]</scope>
    <source>
        <strain>Philadelphia 1 / ATCC 33152 / DSM 7513</strain>
    </source>
</reference>
<keyword id="KW-0012">Acyltransferase</keyword>
<keyword id="KW-0441">Lipid A biosynthesis</keyword>
<keyword id="KW-0444">Lipid biosynthesis</keyword>
<keyword id="KW-0443">Lipid metabolism</keyword>
<keyword id="KW-1185">Reference proteome</keyword>
<keyword id="KW-0677">Repeat</keyword>
<keyword id="KW-0808">Transferase</keyword>
<accession>Q5ZZB1</accession>
<comment type="function">
    <text evidence="1">Catalyzes the N-acylation of UDP-3-O-acylglucosamine using 3-hydroxyacyl-ACP as the acyl donor. Is involved in the biosynthesis of lipid A, a phosphorylated glycolipid that anchors the lipopolysaccharide to the outer membrane of the cell.</text>
</comment>
<comment type="catalytic activity">
    <reaction evidence="1">
        <text>a UDP-3-O-[(3R)-3-hydroxyacyl]-alpha-D-glucosamine + a (3R)-hydroxyacyl-[ACP] = a UDP-2-N,3-O-bis[(3R)-3-hydroxyacyl]-alpha-D-glucosamine + holo-[ACP] + H(+)</text>
        <dbReference type="Rhea" id="RHEA:53836"/>
        <dbReference type="Rhea" id="RHEA-COMP:9685"/>
        <dbReference type="Rhea" id="RHEA-COMP:9945"/>
        <dbReference type="ChEBI" id="CHEBI:15378"/>
        <dbReference type="ChEBI" id="CHEBI:64479"/>
        <dbReference type="ChEBI" id="CHEBI:78827"/>
        <dbReference type="ChEBI" id="CHEBI:137740"/>
        <dbReference type="ChEBI" id="CHEBI:137748"/>
        <dbReference type="EC" id="2.3.1.191"/>
    </reaction>
</comment>
<comment type="pathway">
    <text evidence="1">Bacterial outer membrane biogenesis; LPS lipid A biosynthesis.</text>
</comment>
<comment type="subunit">
    <text evidence="1">Homotrimer.</text>
</comment>
<comment type="similarity">
    <text evidence="1">Belongs to the transferase hexapeptide repeat family. LpxD subfamily.</text>
</comment>
<comment type="sequence caution" evidence="2">
    <conflict type="erroneous initiation">
        <sequence resource="EMBL-CDS" id="AAU26207"/>
    </conflict>
</comment>
<gene>
    <name evidence="1" type="primary">lpxD1</name>
    <name type="ordered locus">lpg0100</name>
</gene>